<organism>
    <name type="scientific">Sodalis glossinidius (strain morsitans)</name>
    <dbReference type="NCBI Taxonomy" id="343509"/>
    <lineage>
        <taxon>Bacteria</taxon>
        <taxon>Pseudomonadati</taxon>
        <taxon>Pseudomonadota</taxon>
        <taxon>Gammaproteobacteria</taxon>
        <taxon>Enterobacterales</taxon>
        <taxon>Bruguierivoracaceae</taxon>
        <taxon>Sodalis</taxon>
    </lineage>
</organism>
<accession>Q2NQS9</accession>
<protein>
    <recommendedName>
        <fullName evidence="1">Guanylate kinase</fullName>
        <ecNumber evidence="1">2.7.4.8</ecNumber>
    </recommendedName>
    <alternativeName>
        <fullName evidence="1">GMP kinase</fullName>
    </alternativeName>
</protein>
<feature type="chain" id="PRO_0000266405" description="Guanylate kinase">
    <location>
        <begin position="1"/>
        <end position="207"/>
    </location>
</feature>
<feature type="domain" description="Guanylate kinase-like" evidence="1">
    <location>
        <begin position="4"/>
        <end position="184"/>
    </location>
</feature>
<feature type="binding site" evidence="1">
    <location>
        <begin position="11"/>
        <end position="18"/>
    </location>
    <ligand>
        <name>ATP</name>
        <dbReference type="ChEBI" id="CHEBI:30616"/>
    </ligand>
</feature>
<dbReference type="EC" id="2.7.4.8" evidence="1"/>
<dbReference type="EMBL" id="AP008232">
    <property type="protein sequence ID" value="BAE75496.1"/>
    <property type="molecule type" value="Genomic_DNA"/>
</dbReference>
<dbReference type="RefSeq" id="WP_011412032.1">
    <property type="nucleotide sequence ID" value="NC_007712.1"/>
</dbReference>
<dbReference type="SMR" id="Q2NQS9"/>
<dbReference type="STRING" id="343509.SG2221"/>
<dbReference type="KEGG" id="sgl:SG2221"/>
<dbReference type="eggNOG" id="COG0194">
    <property type="taxonomic scope" value="Bacteria"/>
</dbReference>
<dbReference type="HOGENOM" id="CLU_001715_1_0_6"/>
<dbReference type="OrthoDB" id="9808150at2"/>
<dbReference type="BioCyc" id="SGLO343509:SGP1_RS20470-MONOMER"/>
<dbReference type="Proteomes" id="UP000001932">
    <property type="component" value="Chromosome"/>
</dbReference>
<dbReference type="GO" id="GO:0005829">
    <property type="term" value="C:cytosol"/>
    <property type="evidence" value="ECO:0007669"/>
    <property type="project" value="TreeGrafter"/>
</dbReference>
<dbReference type="GO" id="GO:0005524">
    <property type="term" value="F:ATP binding"/>
    <property type="evidence" value="ECO:0007669"/>
    <property type="project" value="UniProtKB-UniRule"/>
</dbReference>
<dbReference type="GO" id="GO:0004385">
    <property type="term" value="F:guanylate kinase activity"/>
    <property type="evidence" value="ECO:0007669"/>
    <property type="project" value="UniProtKB-UniRule"/>
</dbReference>
<dbReference type="CDD" id="cd00071">
    <property type="entry name" value="GMPK"/>
    <property type="match status" value="1"/>
</dbReference>
<dbReference type="FunFam" id="3.40.50.300:FF:000084">
    <property type="entry name" value="Guanylate kinase"/>
    <property type="match status" value="1"/>
</dbReference>
<dbReference type="FunFam" id="3.30.63.10:FF:000002">
    <property type="entry name" value="Guanylate kinase 1"/>
    <property type="match status" value="1"/>
</dbReference>
<dbReference type="Gene3D" id="3.30.63.10">
    <property type="entry name" value="Guanylate Kinase phosphate binding domain"/>
    <property type="match status" value="1"/>
</dbReference>
<dbReference type="Gene3D" id="3.40.50.300">
    <property type="entry name" value="P-loop containing nucleotide triphosphate hydrolases"/>
    <property type="match status" value="1"/>
</dbReference>
<dbReference type="HAMAP" id="MF_00328">
    <property type="entry name" value="Guanylate_kinase"/>
    <property type="match status" value="1"/>
</dbReference>
<dbReference type="InterPro" id="IPR008145">
    <property type="entry name" value="GK/Ca_channel_bsu"/>
</dbReference>
<dbReference type="InterPro" id="IPR008144">
    <property type="entry name" value="Guanylate_kin-like_dom"/>
</dbReference>
<dbReference type="InterPro" id="IPR017665">
    <property type="entry name" value="Guanylate_kinase"/>
</dbReference>
<dbReference type="InterPro" id="IPR020590">
    <property type="entry name" value="Guanylate_kinase_CS"/>
</dbReference>
<dbReference type="InterPro" id="IPR027417">
    <property type="entry name" value="P-loop_NTPase"/>
</dbReference>
<dbReference type="NCBIfam" id="TIGR03263">
    <property type="entry name" value="guanyl_kin"/>
    <property type="match status" value="1"/>
</dbReference>
<dbReference type="PANTHER" id="PTHR23117:SF13">
    <property type="entry name" value="GUANYLATE KINASE"/>
    <property type="match status" value="1"/>
</dbReference>
<dbReference type="PANTHER" id="PTHR23117">
    <property type="entry name" value="GUANYLATE KINASE-RELATED"/>
    <property type="match status" value="1"/>
</dbReference>
<dbReference type="Pfam" id="PF00625">
    <property type="entry name" value="Guanylate_kin"/>
    <property type="match status" value="1"/>
</dbReference>
<dbReference type="SMART" id="SM00072">
    <property type="entry name" value="GuKc"/>
    <property type="match status" value="1"/>
</dbReference>
<dbReference type="SUPFAM" id="SSF52540">
    <property type="entry name" value="P-loop containing nucleoside triphosphate hydrolases"/>
    <property type="match status" value="1"/>
</dbReference>
<dbReference type="PROSITE" id="PS00856">
    <property type="entry name" value="GUANYLATE_KINASE_1"/>
    <property type="match status" value="1"/>
</dbReference>
<dbReference type="PROSITE" id="PS50052">
    <property type="entry name" value="GUANYLATE_KINASE_2"/>
    <property type="match status" value="1"/>
</dbReference>
<keyword id="KW-0067">ATP-binding</keyword>
<keyword id="KW-0963">Cytoplasm</keyword>
<keyword id="KW-0418">Kinase</keyword>
<keyword id="KW-0547">Nucleotide-binding</keyword>
<keyword id="KW-0808">Transferase</keyword>
<name>KGUA_SODGM</name>
<comment type="function">
    <text evidence="1">Essential for recycling GMP and indirectly, cGMP.</text>
</comment>
<comment type="catalytic activity">
    <reaction evidence="1">
        <text>GMP + ATP = GDP + ADP</text>
        <dbReference type="Rhea" id="RHEA:20780"/>
        <dbReference type="ChEBI" id="CHEBI:30616"/>
        <dbReference type="ChEBI" id="CHEBI:58115"/>
        <dbReference type="ChEBI" id="CHEBI:58189"/>
        <dbReference type="ChEBI" id="CHEBI:456216"/>
        <dbReference type="EC" id="2.7.4.8"/>
    </reaction>
</comment>
<comment type="subcellular location">
    <subcellularLocation>
        <location evidence="1">Cytoplasm</location>
    </subcellularLocation>
</comment>
<comment type="similarity">
    <text evidence="1">Belongs to the guanylate kinase family.</text>
</comment>
<evidence type="ECO:0000255" key="1">
    <source>
        <dbReference type="HAMAP-Rule" id="MF_00328"/>
    </source>
</evidence>
<proteinExistence type="inferred from homology"/>
<reference key="1">
    <citation type="journal article" date="2006" name="Genome Res.">
        <title>Massive genome erosion and functional adaptations provide insights into the symbiotic lifestyle of Sodalis glossinidius in the tsetse host.</title>
        <authorList>
            <person name="Toh H."/>
            <person name="Weiss B.L."/>
            <person name="Perkin S.A.H."/>
            <person name="Yamashita A."/>
            <person name="Oshima K."/>
            <person name="Hattori M."/>
            <person name="Aksoy S."/>
        </authorList>
    </citation>
    <scope>NUCLEOTIDE SEQUENCE [LARGE SCALE GENOMIC DNA]</scope>
    <source>
        <strain>morsitans</strain>
    </source>
</reference>
<sequence length="207" mass="23496">MIQGTLYIVSAPSGAGKSSLIQALLKTQPLYDTQVSISHTTRAMRPGEAHGQHYFFVPVAEFEHMIAEDAFLEYARVFDNYYGTSREAIQQVLATGVDVFLDIDWQGAQQIRAKMPDARSIFVLPPSKEELDRRLRGRDQDSEEVIGRRMAQAVAEMTHFAEYDYLIVNDDFNTALLDLKTIIRAERLRLGRQKLHHDALISKLLAD</sequence>
<gene>
    <name evidence="1" type="primary">gmk</name>
    <name type="ordered locus">SG2221</name>
</gene>